<protein>
    <recommendedName>
        <fullName evidence="1">Putative 3-methyladenine DNA glycosylase</fullName>
        <ecNumber evidence="1">3.2.2.-</ecNumber>
    </recommendedName>
</protein>
<accession>A1UH86</accession>
<comment type="similarity">
    <text evidence="1">Belongs to the DNA glycosylase MPG family.</text>
</comment>
<reference key="1">
    <citation type="submission" date="2006-12" db="EMBL/GenBank/DDBJ databases">
        <title>Complete sequence of chromosome of Mycobacterium sp. KMS.</title>
        <authorList>
            <consortium name="US DOE Joint Genome Institute"/>
            <person name="Copeland A."/>
            <person name="Lucas S."/>
            <person name="Lapidus A."/>
            <person name="Barry K."/>
            <person name="Detter J.C."/>
            <person name="Glavina del Rio T."/>
            <person name="Hammon N."/>
            <person name="Israni S."/>
            <person name="Dalin E."/>
            <person name="Tice H."/>
            <person name="Pitluck S."/>
            <person name="Kiss H."/>
            <person name="Brettin T."/>
            <person name="Bruce D."/>
            <person name="Han C."/>
            <person name="Tapia R."/>
            <person name="Gilna P."/>
            <person name="Schmutz J."/>
            <person name="Larimer F."/>
            <person name="Land M."/>
            <person name="Hauser L."/>
            <person name="Kyrpides N."/>
            <person name="Mikhailova N."/>
            <person name="Miller C.D."/>
            <person name="Richardson P."/>
        </authorList>
    </citation>
    <scope>NUCLEOTIDE SEQUENCE [LARGE SCALE GENOMIC DNA]</scope>
    <source>
        <strain>KMS</strain>
    </source>
</reference>
<evidence type="ECO:0000255" key="1">
    <source>
        <dbReference type="HAMAP-Rule" id="MF_00527"/>
    </source>
</evidence>
<gene>
    <name type="ordered locus">Mkms_3000</name>
</gene>
<keyword id="KW-0227">DNA damage</keyword>
<keyword id="KW-0234">DNA repair</keyword>
<keyword id="KW-0378">Hydrolase</keyword>
<organism>
    <name type="scientific">Mycobacterium sp. (strain KMS)</name>
    <dbReference type="NCBI Taxonomy" id="189918"/>
    <lineage>
        <taxon>Bacteria</taxon>
        <taxon>Bacillati</taxon>
        <taxon>Actinomycetota</taxon>
        <taxon>Actinomycetes</taxon>
        <taxon>Mycobacteriales</taxon>
        <taxon>Mycobacteriaceae</taxon>
        <taxon>Mycobacterium</taxon>
    </lineage>
</organism>
<sequence>MVSVELLRVDPLTAARRLLGAVLTCRGVSATVVEVEAYGGPPDGPWPDAAAHSYRGPGPRNQVMFGPAGRLYTYRSHGIHVCANVACADDGVAAAVLLRAAVIESGHDVVQRRRGEAVRESAFARGPGNLCSALGITMADNGIDVFAEDSPVHLRLGEEQPCIAGPRVGVSKAADRPWRLWLAGRPEVSAYRRSPRAPAPGGSD</sequence>
<name>3MGH_MYCSK</name>
<dbReference type="EC" id="3.2.2.-" evidence="1"/>
<dbReference type="EMBL" id="CP000518">
    <property type="protein sequence ID" value="ABL92194.1"/>
    <property type="molecule type" value="Genomic_DNA"/>
</dbReference>
<dbReference type="SMR" id="A1UH86"/>
<dbReference type="STRING" id="189918.Mkms_3000"/>
<dbReference type="KEGG" id="mkm:Mkms_3000"/>
<dbReference type="HOGENOM" id="CLU_060471_3_1_11"/>
<dbReference type="OrthoDB" id="9794313at2"/>
<dbReference type="GO" id="GO:0003905">
    <property type="term" value="F:alkylbase DNA N-glycosylase activity"/>
    <property type="evidence" value="ECO:0007669"/>
    <property type="project" value="InterPro"/>
</dbReference>
<dbReference type="GO" id="GO:0003677">
    <property type="term" value="F:DNA binding"/>
    <property type="evidence" value="ECO:0007669"/>
    <property type="project" value="InterPro"/>
</dbReference>
<dbReference type="GO" id="GO:0006284">
    <property type="term" value="P:base-excision repair"/>
    <property type="evidence" value="ECO:0007669"/>
    <property type="project" value="InterPro"/>
</dbReference>
<dbReference type="CDD" id="cd00540">
    <property type="entry name" value="AAG"/>
    <property type="match status" value="1"/>
</dbReference>
<dbReference type="Gene3D" id="3.10.300.10">
    <property type="entry name" value="Methylpurine-DNA glycosylase (MPG)"/>
    <property type="match status" value="1"/>
</dbReference>
<dbReference type="HAMAP" id="MF_00527">
    <property type="entry name" value="3MGH"/>
    <property type="match status" value="1"/>
</dbReference>
<dbReference type="InterPro" id="IPR011034">
    <property type="entry name" value="Formyl_transferase-like_C_sf"/>
</dbReference>
<dbReference type="InterPro" id="IPR003180">
    <property type="entry name" value="MPG"/>
</dbReference>
<dbReference type="InterPro" id="IPR036995">
    <property type="entry name" value="MPG_sf"/>
</dbReference>
<dbReference type="NCBIfam" id="TIGR00567">
    <property type="entry name" value="3mg"/>
    <property type="match status" value="1"/>
</dbReference>
<dbReference type="NCBIfam" id="NF002003">
    <property type="entry name" value="PRK00802.1-3"/>
    <property type="match status" value="1"/>
</dbReference>
<dbReference type="PANTHER" id="PTHR10429">
    <property type="entry name" value="DNA-3-METHYLADENINE GLYCOSYLASE"/>
    <property type="match status" value="1"/>
</dbReference>
<dbReference type="PANTHER" id="PTHR10429:SF0">
    <property type="entry name" value="DNA-3-METHYLADENINE GLYCOSYLASE"/>
    <property type="match status" value="1"/>
</dbReference>
<dbReference type="Pfam" id="PF02245">
    <property type="entry name" value="Pur_DNA_glyco"/>
    <property type="match status" value="1"/>
</dbReference>
<dbReference type="SUPFAM" id="SSF50486">
    <property type="entry name" value="FMT C-terminal domain-like"/>
    <property type="match status" value="1"/>
</dbReference>
<feature type="chain" id="PRO_1000050995" description="Putative 3-methyladenine DNA glycosylase">
    <location>
        <begin position="1"/>
        <end position="204"/>
    </location>
</feature>
<proteinExistence type="inferred from homology"/>